<reference key="1">
    <citation type="journal article" date="2003" name="Genome Res.">
        <title>Comparative complete genome sequence analysis of the amino acid replacements responsible for the thermostability of Corynebacterium efficiens.</title>
        <authorList>
            <person name="Nishio Y."/>
            <person name="Nakamura Y."/>
            <person name="Kawarabayasi Y."/>
            <person name="Usuda Y."/>
            <person name="Kimura E."/>
            <person name="Sugimoto S."/>
            <person name="Matsui K."/>
            <person name="Yamagishi A."/>
            <person name="Kikuchi H."/>
            <person name="Ikeo K."/>
            <person name="Gojobori T."/>
        </authorList>
    </citation>
    <scope>NUCLEOTIDE SEQUENCE [LARGE SCALE GENOMIC DNA]</scope>
    <source>
        <strain>DSM 44549 / YS-314 / AJ 12310 / JCM 11189 / NBRC 100395</strain>
    </source>
</reference>
<organism>
    <name type="scientific">Corynebacterium efficiens (strain DSM 44549 / YS-314 / AJ 12310 / JCM 11189 / NBRC 100395)</name>
    <dbReference type="NCBI Taxonomy" id="196164"/>
    <lineage>
        <taxon>Bacteria</taxon>
        <taxon>Bacillati</taxon>
        <taxon>Actinomycetota</taxon>
        <taxon>Actinomycetes</taxon>
        <taxon>Mycobacteriales</taxon>
        <taxon>Corynebacteriaceae</taxon>
        <taxon>Corynebacterium</taxon>
    </lineage>
</organism>
<gene>
    <name evidence="1" type="primary">pstB</name>
    <name type="ordered locus">CE2464</name>
</gene>
<evidence type="ECO:0000255" key="1">
    <source>
        <dbReference type="HAMAP-Rule" id="MF_01702"/>
    </source>
</evidence>
<evidence type="ECO:0000305" key="2"/>
<sequence length="257" mass="28207">MSKLKLNDVNIYYGDFHAVQNVNLEVPARSVTAFIGPSGCGKSTVLRSINRMHEVIPGAYVEGEILLDGENIYGPKIDPVAVRNTIGMVFQKANPFPTMSIEDNVVAGLRLSGEKNKKKLKEVAEQSLRGANLWEEVKDRLDKPGGGLSGGQQQRLCIARAIAVKPEVLLMDEPCSALDPISTLAVEDLIHELKEEFTIVIVTHNMQQAARVSDQTAFYSLEATGKPGRLVELGPTKKIFENPDNKETEDYISGRFG</sequence>
<keyword id="KW-0067">ATP-binding</keyword>
<keyword id="KW-1003">Cell membrane</keyword>
<keyword id="KW-0472">Membrane</keyword>
<keyword id="KW-0547">Nucleotide-binding</keyword>
<keyword id="KW-0592">Phosphate transport</keyword>
<keyword id="KW-1185">Reference proteome</keyword>
<keyword id="KW-1278">Translocase</keyword>
<keyword id="KW-0813">Transport</keyword>
<accession>Q8FMN9</accession>
<name>PSTB_COREF</name>
<comment type="function">
    <text evidence="1">Part of the ABC transporter complex PstSACB involved in phosphate import. Responsible for energy coupling to the transport system.</text>
</comment>
<comment type="catalytic activity">
    <reaction evidence="1">
        <text>phosphate(out) + ATP + H2O = ADP + 2 phosphate(in) + H(+)</text>
        <dbReference type="Rhea" id="RHEA:24440"/>
        <dbReference type="ChEBI" id="CHEBI:15377"/>
        <dbReference type="ChEBI" id="CHEBI:15378"/>
        <dbReference type="ChEBI" id="CHEBI:30616"/>
        <dbReference type="ChEBI" id="CHEBI:43474"/>
        <dbReference type="ChEBI" id="CHEBI:456216"/>
        <dbReference type="EC" id="7.3.2.1"/>
    </reaction>
</comment>
<comment type="subunit">
    <text evidence="1">The complex is composed of two ATP-binding proteins (PstB), two transmembrane proteins (PstC and PstA) and a solute-binding protein (PstS).</text>
</comment>
<comment type="subcellular location">
    <subcellularLocation>
        <location evidence="1">Cell membrane</location>
        <topology evidence="1">Peripheral membrane protein</topology>
    </subcellularLocation>
</comment>
<comment type="similarity">
    <text evidence="1">Belongs to the ABC transporter superfamily. Phosphate importer (TC 3.A.1.7) family.</text>
</comment>
<comment type="sequence caution" evidence="2">
    <conflict type="erroneous initiation">
        <sequence resource="EMBL-CDS" id="BAC19274"/>
    </conflict>
</comment>
<protein>
    <recommendedName>
        <fullName evidence="1">Phosphate import ATP-binding protein PstB</fullName>
        <ecNumber evidence="1">7.3.2.1</ecNumber>
    </recommendedName>
    <alternativeName>
        <fullName evidence="1">ABC phosphate transporter</fullName>
    </alternativeName>
    <alternativeName>
        <fullName evidence="1">Phosphate-transporting ATPase</fullName>
    </alternativeName>
</protein>
<feature type="chain" id="PRO_0000092805" description="Phosphate import ATP-binding protein PstB">
    <location>
        <begin position="1"/>
        <end position="257"/>
    </location>
</feature>
<feature type="domain" description="ABC transporter" evidence="1">
    <location>
        <begin position="4"/>
        <end position="252"/>
    </location>
</feature>
<feature type="binding site" evidence="1">
    <location>
        <begin position="36"/>
        <end position="43"/>
    </location>
    <ligand>
        <name>ATP</name>
        <dbReference type="ChEBI" id="CHEBI:30616"/>
    </ligand>
</feature>
<proteinExistence type="inferred from homology"/>
<dbReference type="EC" id="7.3.2.1" evidence="1"/>
<dbReference type="EMBL" id="BA000035">
    <property type="protein sequence ID" value="BAC19274.1"/>
    <property type="status" value="ALT_INIT"/>
    <property type="molecule type" value="Genomic_DNA"/>
</dbReference>
<dbReference type="RefSeq" id="WP_006769179.1">
    <property type="nucleotide sequence ID" value="NC_004369.1"/>
</dbReference>
<dbReference type="SMR" id="Q8FMN9"/>
<dbReference type="STRING" id="196164.gene:10742910"/>
<dbReference type="KEGG" id="cef:CE2464"/>
<dbReference type="eggNOG" id="COG1117">
    <property type="taxonomic scope" value="Bacteria"/>
</dbReference>
<dbReference type="HOGENOM" id="CLU_000604_1_22_11"/>
<dbReference type="OrthoDB" id="4398079at2"/>
<dbReference type="Proteomes" id="UP000001409">
    <property type="component" value="Chromosome"/>
</dbReference>
<dbReference type="GO" id="GO:0005886">
    <property type="term" value="C:plasma membrane"/>
    <property type="evidence" value="ECO:0007669"/>
    <property type="project" value="UniProtKB-SubCell"/>
</dbReference>
<dbReference type="GO" id="GO:0005524">
    <property type="term" value="F:ATP binding"/>
    <property type="evidence" value="ECO:0007669"/>
    <property type="project" value="UniProtKB-KW"/>
</dbReference>
<dbReference type="GO" id="GO:0016887">
    <property type="term" value="F:ATP hydrolysis activity"/>
    <property type="evidence" value="ECO:0007669"/>
    <property type="project" value="InterPro"/>
</dbReference>
<dbReference type="GO" id="GO:0015415">
    <property type="term" value="F:ATPase-coupled phosphate ion transmembrane transporter activity"/>
    <property type="evidence" value="ECO:0007669"/>
    <property type="project" value="UniProtKB-EC"/>
</dbReference>
<dbReference type="GO" id="GO:0035435">
    <property type="term" value="P:phosphate ion transmembrane transport"/>
    <property type="evidence" value="ECO:0007669"/>
    <property type="project" value="InterPro"/>
</dbReference>
<dbReference type="CDD" id="cd03260">
    <property type="entry name" value="ABC_PstB_phosphate_transporter"/>
    <property type="match status" value="1"/>
</dbReference>
<dbReference type="Gene3D" id="3.40.50.300">
    <property type="entry name" value="P-loop containing nucleotide triphosphate hydrolases"/>
    <property type="match status" value="1"/>
</dbReference>
<dbReference type="InterPro" id="IPR003593">
    <property type="entry name" value="AAA+_ATPase"/>
</dbReference>
<dbReference type="InterPro" id="IPR003439">
    <property type="entry name" value="ABC_transporter-like_ATP-bd"/>
</dbReference>
<dbReference type="InterPro" id="IPR017871">
    <property type="entry name" value="ABC_transporter-like_CS"/>
</dbReference>
<dbReference type="InterPro" id="IPR027417">
    <property type="entry name" value="P-loop_NTPase"/>
</dbReference>
<dbReference type="InterPro" id="IPR005670">
    <property type="entry name" value="PstB-like"/>
</dbReference>
<dbReference type="NCBIfam" id="TIGR00972">
    <property type="entry name" value="3a0107s01c2"/>
    <property type="match status" value="1"/>
</dbReference>
<dbReference type="PANTHER" id="PTHR43423">
    <property type="entry name" value="ABC TRANSPORTER I FAMILY MEMBER 17"/>
    <property type="match status" value="1"/>
</dbReference>
<dbReference type="PANTHER" id="PTHR43423:SF1">
    <property type="entry name" value="ABC TRANSPORTER I FAMILY MEMBER 17"/>
    <property type="match status" value="1"/>
</dbReference>
<dbReference type="Pfam" id="PF00005">
    <property type="entry name" value="ABC_tran"/>
    <property type="match status" value="1"/>
</dbReference>
<dbReference type="SMART" id="SM00382">
    <property type="entry name" value="AAA"/>
    <property type="match status" value="1"/>
</dbReference>
<dbReference type="SUPFAM" id="SSF52540">
    <property type="entry name" value="P-loop containing nucleoside triphosphate hydrolases"/>
    <property type="match status" value="1"/>
</dbReference>
<dbReference type="PROSITE" id="PS00211">
    <property type="entry name" value="ABC_TRANSPORTER_1"/>
    <property type="match status" value="1"/>
</dbReference>
<dbReference type="PROSITE" id="PS50893">
    <property type="entry name" value="ABC_TRANSPORTER_2"/>
    <property type="match status" value="1"/>
</dbReference>
<dbReference type="PROSITE" id="PS51238">
    <property type="entry name" value="PSTB"/>
    <property type="match status" value="1"/>
</dbReference>